<gene>
    <name evidence="1" type="primary">atpF</name>
</gene>
<keyword id="KW-0066">ATP synthesis</keyword>
<keyword id="KW-0138">CF(0)</keyword>
<keyword id="KW-0150">Chloroplast</keyword>
<keyword id="KW-0375">Hydrogen ion transport</keyword>
<keyword id="KW-0406">Ion transport</keyword>
<keyword id="KW-0472">Membrane</keyword>
<keyword id="KW-0934">Plastid</keyword>
<keyword id="KW-0793">Thylakoid</keyword>
<keyword id="KW-0812">Transmembrane</keyword>
<keyword id="KW-1133">Transmembrane helix</keyword>
<keyword id="KW-0813">Transport</keyword>
<protein>
    <recommendedName>
        <fullName evidence="1">ATP synthase subunit b, chloroplastic</fullName>
    </recommendedName>
    <alternativeName>
        <fullName evidence="1">ATP synthase F(0) sector subunit b</fullName>
    </alternativeName>
    <alternativeName>
        <fullName evidence="1">ATPase subunit I</fullName>
    </alternativeName>
</protein>
<sequence>MKNVTDSFVSLVNWPFAGSFGLNTDILATNPINLSVVLGVLIFFGKGVLSDLLDNRKLRILNSIRNSEELQRGAIERLEKARARLRKIEIEADQFRVNGYSEIEREKFNLINSTYKTLDQLENYKNETIHFEQQRAINQVRQRVFQQALQGALGTLNSCLNKELHLRTISANIGMFGAMKEITD</sequence>
<evidence type="ECO:0000255" key="1">
    <source>
        <dbReference type="HAMAP-Rule" id="MF_01398"/>
    </source>
</evidence>
<reference key="1">
    <citation type="journal article" date="2006" name="BMC Plant Biol.">
        <title>The complete chloroplast genome sequence of Citrus sinensis (L.) Osbeck var 'Ridge Pineapple': organization and phylogenetic relationships to other angiosperms.</title>
        <authorList>
            <person name="Bausher M.G."/>
            <person name="Singh N.D."/>
            <person name="Lee S.-B."/>
            <person name="Jansen R.K."/>
            <person name="Daniell H."/>
        </authorList>
    </citation>
    <scope>NUCLEOTIDE SEQUENCE [LARGE SCALE GENOMIC DNA]</scope>
    <source>
        <strain>cv. Osbeck var. Ridge Pineapple</strain>
    </source>
</reference>
<accession>Q09MJ2</accession>
<comment type="function">
    <text evidence="1">F(1)F(0) ATP synthase produces ATP from ADP in the presence of a proton or sodium gradient. F-type ATPases consist of two structural domains, F(1) containing the extramembraneous catalytic core and F(0) containing the membrane proton channel, linked together by a central stalk and a peripheral stalk. During catalysis, ATP synthesis in the catalytic domain of F(1) is coupled via a rotary mechanism of the central stalk subunits to proton translocation.</text>
</comment>
<comment type="function">
    <text evidence="1">Component of the F(0) channel, it forms part of the peripheral stalk, linking F(1) to F(0).</text>
</comment>
<comment type="subunit">
    <text evidence="1">F-type ATPases have 2 components, F(1) - the catalytic core - and F(0) - the membrane proton channel. F(1) has five subunits: alpha(3), beta(3), gamma(1), delta(1), epsilon(1). F(0) has four main subunits: a(1), b(1), b'(1) and c(10-14). The alpha and beta chains form an alternating ring which encloses part of the gamma chain. F(1) is attached to F(0) by a central stalk formed by the gamma and epsilon chains, while a peripheral stalk is formed by the delta, b and b' chains.</text>
</comment>
<comment type="subcellular location">
    <subcellularLocation>
        <location evidence="1">Plastid</location>
        <location evidence="1">Chloroplast thylakoid membrane</location>
        <topology evidence="1">Single-pass membrane protein</topology>
    </subcellularLocation>
</comment>
<comment type="miscellaneous">
    <text>In plastids the F-type ATPase is also known as CF(1)CF(0).</text>
</comment>
<comment type="similarity">
    <text evidence="1">Belongs to the ATPase B chain family.</text>
</comment>
<geneLocation type="chloroplast"/>
<feature type="chain" id="PRO_0000368920" description="ATP synthase subunit b, chloroplastic">
    <location>
        <begin position="1"/>
        <end position="184"/>
    </location>
</feature>
<feature type="transmembrane region" description="Helical" evidence="1">
    <location>
        <begin position="27"/>
        <end position="49"/>
    </location>
</feature>
<organism>
    <name type="scientific">Citrus sinensis</name>
    <name type="common">Sweet orange</name>
    <name type="synonym">Citrus aurantium var. sinensis</name>
    <dbReference type="NCBI Taxonomy" id="2711"/>
    <lineage>
        <taxon>Eukaryota</taxon>
        <taxon>Viridiplantae</taxon>
        <taxon>Streptophyta</taxon>
        <taxon>Embryophyta</taxon>
        <taxon>Tracheophyta</taxon>
        <taxon>Spermatophyta</taxon>
        <taxon>Magnoliopsida</taxon>
        <taxon>eudicotyledons</taxon>
        <taxon>Gunneridae</taxon>
        <taxon>Pentapetalae</taxon>
        <taxon>rosids</taxon>
        <taxon>malvids</taxon>
        <taxon>Sapindales</taxon>
        <taxon>Rutaceae</taxon>
        <taxon>Aurantioideae</taxon>
        <taxon>Citrus</taxon>
    </lineage>
</organism>
<proteinExistence type="inferred from homology"/>
<dbReference type="EMBL" id="DQ864733">
    <property type="protein sequence ID" value="ABI49006.1"/>
    <property type="molecule type" value="Genomic_DNA"/>
</dbReference>
<dbReference type="RefSeq" id="YP_740461.1">
    <property type="nucleotide sequence ID" value="NC_008334.1"/>
</dbReference>
<dbReference type="SMR" id="Q09MJ2"/>
<dbReference type="GeneID" id="4271229"/>
<dbReference type="KEGG" id="cit:4271229"/>
<dbReference type="OrthoDB" id="917145at71240"/>
<dbReference type="GO" id="GO:0009535">
    <property type="term" value="C:chloroplast thylakoid membrane"/>
    <property type="evidence" value="ECO:0007669"/>
    <property type="project" value="UniProtKB-SubCell"/>
</dbReference>
<dbReference type="GO" id="GO:0045259">
    <property type="term" value="C:proton-transporting ATP synthase complex"/>
    <property type="evidence" value="ECO:0007669"/>
    <property type="project" value="UniProtKB-KW"/>
</dbReference>
<dbReference type="GO" id="GO:0046933">
    <property type="term" value="F:proton-transporting ATP synthase activity, rotational mechanism"/>
    <property type="evidence" value="ECO:0007669"/>
    <property type="project" value="UniProtKB-UniRule"/>
</dbReference>
<dbReference type="CDD" id="cd06503">
    <property type="entry name" value="ATP-synt_Fo_b"/>
    <property type="match status" value="1"/>
</dbReference>
<dbReference type="HAMAP" id="MF_01398">
    <property type="entry name" value="ATP_synth_b_bprime"/>
    <property type="match status" value="1"/>
</dbReference>
<dbReference type="InterPro" id="IPR002146">
    <property type="entry name" value="ATP_synth_b/b'su_bac/chlpt"/>
</dbReference>
<dbReference type="PANTHER" id="PTHR34264">
    <property type="entry name" value="ATP SYNTHASE SUBUNIT B, CHLOROPLASTIC"/>
    <property type="match status" value="1"/>
</dbReference>
<dbReference type="PANTHER" id="PTHR34264:SF3">
    <property type="entry name" value="ATP SYNTHASE SUBUNIT B, CHLOROPLASTIC"/>
    <property type="match status" value="1"/>
</dbReference>
<dbReference type="Pfam" id="PF00430">
    <property type="entry name" value="ATP-synt_B"/>
    <property type="match status" value="1"/>
</dbReference>
<name>ATPF_CITSI</name>